<accession>O78676</accession>
<keyword id="KW-0472">Membrane</keyword>
<keyword id="KW-0602">Photosynthesis</keyword>
<keyword id="KW-0604">Photosystem II</keyword>
<keyword id="KW-0934">Plastid</keyword>
<keyword id="KW-0674">Reaction center</keyword>
<keyword id="KW-0812">Transmembrane</keyword>
<keyword id="KW-1133">Transmembrane helix</keyword>
<reference key="1">
    <citation type="journal article" date="1998" name="Genetics">
        <title>A subset of conserved tRNA genes in plastid DNA of nongreen plants.</title>
        <authorList>
            <person name="Lohan A.J."/>
            <person name="Wolfe K.H."/>
        </authorList>
    </citation>
    <scope>NUCLEOTIDE SEQUENCE [GENOMIC DNA]</scope>
</reference>
<proteinExistence type="inferred from homology"/>
<geneLocation type="non-photosynthetic plastid"/>
<feature type="chain" id="PRO_0000219640" description="Photosystem II reaction center protein I">
    <location>
        <begin position="1"/>
        <end position="36"/>
    </location>
</feature>
<feature type="transmembrane region" description="Helical" evidence="1">
    <location>
        <begin position="6"/>
        <end position="26"/>
    </location>
</feature>
<evidence type="ECO:0000255" key="1">
    <source>
        <dbReference type="HAMAP-Rule" id="MF_01316"/>
    </source>
</evidence>
<evidence type="ECO:0000305" key="2"/>
<dbReference type="EMBL" id="AJ007720">
    <property type="protein sequence ID" value="CAA07622.1"/>
    <property type="molecule type" value="Genomic_DNA"/>
</dbReference>
<dbReference type="SMR" id="O78676"/>
<dbReference type="GO" id="GO:0009539">
    <property type="term" value="C:photosystem II reaction center"/>
    <property type="evidence" value="ECO:0007669"/>
    <property type="project" value="InterPro"/>
</dbReference>
<dbReference type="GO" id="GO:0042170">
    <property type="term" value="C:plastid membrane"/>
    <property type="evidence" value="ECO:0007669"/>
    <property type="project" value="UniProtKB-SubCell"/>
</dbReference>
<dbReference type="GO" id="GO:0042651">
    <property type="term" value="C:thylakoid membrane"/>
    <property type="evidence" value="ECO:0007669"/>
    <property type="project" value="UniProtKB-UniRule"/>
</dbReference>
<dbReference type="HAMAP" id="MF_01316">
    <property type="entry name" value="PSII_PsbI"/>
    <property type="match status" value="1"/>
</dbReference>
<dbReference type="InterPro" id="IPR003686">
    <property type="entry name" value="PSII_PsbI"/>
</dbReference>
<dbReference type="InterPro" id="IPR037271">
    <property type="entry name" value="PSII_PsbI_sf"/>
</dbReference>
<dbReference type="PANTHER" id="PTHR35772">
    <property type="entry name" value="PHOTOSYSTEM II REACTION CENTER PROTEIN I"/>
    <property type="match status" value="1"/>
</dbReference>
<dbReference type="PANTHER" id="PTHR35772:SF1">
    <property type="entry name" value="PHOTOSYSTEM II REACTION CENTER PROTEIN I"/>
    <property type="match status" value="1"/>
</dbReference>
<dbReference type="Pfam" id="PF02532">
    <property type="entry name" value="PsbI"/>
    <property type="match status" value="1"/>
</dbReference>
<dbReference type="SUPFAM" id="SSF161041">
    <property type="entry name" value="Photosystem II reaction center protein I, PsbI"/>
    <property type="match status" value="1"/>
</dbReference>
<protein>
    <recommendedName>
        <fullName evidence="1">Photosystem II reaction center protein I</fullName>
        <shortName evidence="1">PSII-I</shortName>
    </recommendedName>
    <alternativeName>
        <fullName evidence="1">PSII 4.8 kDa protein</fullName>
    </alternativeName>
</protein>
<gene>
    <name evidence="1" type="primary">psbI</name>
</gene>
<organism>
    <name type="scientific">Orobanche minor</name>
    <name type="common">Small broomrape</name>
    <name type="synonym">Hellroot</name>
    <dbReference type="NCBI Taxonomy" id="36748"/>
    <lineage>
        <taxon>Eukaryota</taxon>
        <taxon>Viridiplantae</taxon>
        <taxon>Streptophyta</taxon>
        <taxon>Embryophyta</taxon>
        <taxon>Tracheophyta</taxon>
        <taxon>Spermatophyta</taxon>
        <taxon>Magnoliopsida</taxon>
        <taxon>eudicotyledons</taxon>
        <taxon>Gunneridae</taxon>
        <taxon>Pentapetalae</taxon>
        <taxon>asterids</taxon>
        <taxon>lamiids</taxon>
        <taxon>Lamiales</taxon>
        <taxon>Orobanchaceae</taxon>
        <taxon>Orobancheae</taxon>
        <taxon>Orobanche</taxon>
    </lineage>
</organism>
<comment type="function">
    <text evidence="1">One of the components of the core complex of photosystem II (PSII), required for its stability and/or assembly. PSII is a light-driven water:plastoquinone oxidoreductase that uses light energy to abstract electrons from H(2)O, generating O(2) and a proton gradient subsequently used for ATP formation. It consists of a core antenna complex that captures photons, and an electron transfer chain that converts photonic excitation into a charge separation.</text>
</comment>
<comment type="subunit">
    <text evidence="1">PSII is composed of 1 copy each of membrane proteins PsbA, PsbB, PsbC, PsbD, PsbE, PsbF, PsbH, PsbI, PsbJ, PsbK, PsbL, PsbM, PsbT, PsbX, PsbY, PsbZ, Psb30/Ycf12, at least 3 peripheral proteins of the oxygen-evolving complex and a large number of cofactors. It forms dimeric complexes.</text>
</comment>
<comment type="subcellular location">
    <subcellularLocation>
        <location evidence="2">Plastid membrane</location>
        <topology evidence="1">Single-pass membrane protein</topology>
    </subcellularLocation>
</comment>
<comment type="similarity">
    <text evidence="1">Belongs to the PsbI family.</text>
</comment>
<comment type="caution">
    <text evidence="2">This organism being non-photosynthetic, the role of this protein is uncertain.</text>
</comment>
<name>PSBI_OROMI</name>
<sequence>MFILRLFVYNVVIFFVFLFIFGFLPNDSGRNPGREE</sequence>